<dbReference type="EC" id="7.1.2.2" evidence="2"/>
<dbReference type="EMBL" id="AP009375">
    <property type="protein sequence ID" value="BAF50534.1"/>
    <property type="molecule type" value="Genomic_DNA"/>
</dbReference>
<dbReference type="RefSeq" id="YP_001123710.1">
    <property type="nucleotide sequence ID" value="NC_009274.1"/>
</dbReference>
<dbReference type="SMR" id="A4QLH9"/>
<dbReference type="GeneID" id="4964919"/>
<dbReference type="GO" id="GO:0009535">
    <property type="term" value="C:chloroplast thylakoid membrane"/>
    <property type="evidence" value="ECO:0007669"/>
    <property type="project" value="UniProtKB-SubCell"/>
</dbReference>
<dbReference type="GO" id="GO:0045259">
    <property type="term" value="C:proton-transporting ATP synthase complex"/>
    <property type="evidence" value="ECO:0007669"/>
    <property type="project" value="UniProtKB-KW"/>
</dbReference>
<dbReference type="GO" id="GO:0043531">
    <property type="term" value="F:ADP binding"/>
    <property type="evidence" value="ECO:0007669"/>
    <property type="project" value="TreeGrafter"/>
</dbReference>
<dbReference type="GO" id="GO:0005524">
    <property type="term" value="F:ATP binding"/>
    <property type="evidence" value="ECO:0007669"/>
    <property type="project" value="UniProtKB-UniRule"/>
</dbReference>
<dbReference type="GO" id="GO:0046933">
    <property type="term" value="F:proton-transporting ATP synthase activity, rotational mechanism"/>
    <property type="evidence" value="ECO:0007669"/>
    <property type="project" value="UniProtKB-UniRule"/>
</dbReference>
<dbReference type="CDD" id="cd18113">
    <property type="entry name" value="ATP-synt_F1_alpha_C"/>
    <property type="match status" value="1"/>
</dbReference>
<dbReference type="CDD" id="cd18116">
    <property type="entry name" value="ATP-synt_F1_alpha_N"/>
    <property type="match status" value="1"/>
</dbReference>
<dbReference type="CDD" id="cd01132">
    <property type="entry name" value="F1-ATPase_alpha_CD"/>
    <property type="match status" value="1"/>
</dbReference>
<dbReference type="FunFam" id="1.20.150.20:FF:000001">
    <property type="entry name" value="ATP synthase subunit alpha"/>
    <property type="match status" value="1"/>
</dbReference>
<dbReference type="FunFam" id="2.40.30.20:FF:000001">
    <property type="entry name" value="ATP synthase subunit alpha"/>
    <property type="match status" value="1"/>
</dbReference>
<dbReference type="FunFam" id="3.40.50.300:FF:000002">
    <property type="entry name" value="ATP synthase subunit alpha"/>
    <property type="match status" value="1"/>
</dbReference>
<dbReference type="Gene3D" id="2.40.30.20">
    <property type="match status" value="1"/>
</dbReference>
<dbReference type="Gene3D" id="1.20.150.20">
    <property type="entry name" value="ATP synthase alpha/beta chain, C-terminal domain"/>
    <property type="match status" value="1"/>
</dbReference>
<dbReference type="Gene3D" id="3.40.50.300">
    <property type="entry name" value="P-loop containing nucleotide triphosphate hydrolases"/>
    <property type="match status" value="1"/>
</dbReference>
<dbReference type="HAMAP" id="MF_01346">
    <property type="entry name" value="ATP_synth_alpha_bact"/>
    <property type="match status" value="1"/>
</dbReference>
<dbReference type="InterPro" id="IPR023366">
    <property type="entry name" value="ATP_synth_asu-like_sf"/>
</dbReference>
<dbReference type="InterPro" id="IPR000793">
    <property type="entry name" value="ATP_synth_asu_C"/>
</dbReference>
<dbReference type="InterPro" id="IPR038376">
    <property type="entry name" value="ATP_synth_asu_C_sf"/>
</dbReference>
<dbReference type="InterPro" id="IPR033732">
    <property type="entry name" value="ATP_synth_F1_a_nt-bd_dom"/>
</dbReference>
<dbReference type="InterPro" id="IPR005294">
    <property type="entry name" value="ATP_synth_F1_asu"/>
</dbReference>
<dbReference type="InterPro" id="IPR020003">
    <property type="entry name" value="ATPase_a/bsu_AS"/>
</dbReference>
<dbReference type="InterPro" id="IPR004100">
    <property type="entry name" value="ATPase_F1/V1/A1_a/bsu_N"/>
</dbReference>
<dbReference type="InterPro" id="IPR036121">
    <property type="entry name" value="ATPase_F1/V1/A1_a/bsu_N_sf"/>
</dbReference>
<dbReference type="InterPro" id="IPR000194">
    <property type="entry name" value="ATPase_F1/V1/A1_a/bsu_nucl-bd"/>
</dbReference>
<dbReference type="InterPro" id="IPR027417">
    <property type="entry name" value="P-loop_NTPase"/>
</dbReference>
<dbReference type="NCBIfam" id="TIGR00962">
    <property type="entry name" value="atpA"/>
    <property type="match status" value="1"/>
</dbReference>
<dbReference type="NCBIfam" id="NF009884">
    <property type="entry name" value="PRK13343.1"/>
    <property type="match status" value="1"/>
</dbReference>
<dbReference type="PANTHER" id="PTHR48082">
    <property type="entry name" value="ATP SYNTHASE SUBUNIT ALPHA, MITOCHONDRIAL"/>
    <property type="match status" value="1"/>
</dbReference>
<dbReference type="PANTHER" id="PTHR48082:SF2">
    <property type="entry name" value="ATP SYNTHASE SUBUNIT ALPHA, MITOCHONDRIAL"/>
    <property type="match status" value="1"/>
</dbReference>
<dbReference type="Pfam" id="PF00006">
    <property type="entry name" value="ATP-synt_ab"/>
    <property type="match status" value="1"/>
</dbReference>
<dbReference type="Pfam" id="PF00306">
    <property type="entry name" value="ATP-synt_ab_C"/>
    <property type="match status" value="1"/>
</dbReference>
<dbReference type="Pfam" id="PF02874">
    <property type="entry name" value="ATP-synt_ab_N"/>
    <property type="match status" value="1"/>
</dbReference>
<dbReference type="PIRSF" id="PIRSF039088">
    <property type="entry name" value="F_ATPase_subunit_alpha"/>
    <property type="match status" value="1"/>
</dbReference>
<dbReference type="SUPFAM" id="SSF47917">
    <property type="entry name" value="C-terminal domain of alpha and beta subunits of F1 ATP synthase"/>
    <property type="match status" value="1"/>
</dbReference>
<dbReference type="SUPFAM" id="SSF50615">
    <property type="entry name" value="N-terminal domain of alpha and beta subunits of F1 ATP synthase"/>
    <property type="match status" value="1"/>
</dbReference>
<dbReference type="SUPFAM" id="SSF52540">
    <property type="entry name" value="P-loop containing nucleoside triphosphate hydrolases"/>
    <property type="match status" value="1"/>
</dbReference>
<dbReference type="PROSITE" id="PS00152">
    <property type="entry name" value="ATPASE_ALPHA_BETA"/>
    <property type="match status" value="1"/>
</dbReference>
<protein>
    <recommendedName>
        <fullName evidence="2">ATP synthase subunit alpha, chloroplastic</fullName>
        <ecNumber evidence="2">7.1.2.2</ecNumber>
    </recommendedName>
    <alternativeName>
        <fullName evidence="2">ATP synthase F1 sector subunit alpha</fullName>
    </alternativeName>
    <alternativeName>
        <fullName evidence="2">F-ATPase subunit alpha</fullName>
    </alternativeName>
</protein>
<name>ATPA_LOBMA</name>
<sequence length="507" mass="55341">MVTIRADEISNIIRERIEQYNREVTIVNTGTVLQVGDGIARIYGLDEVMAGELVEFEEGTIGIALNLESNNVGVVLMGDGLMIQEGSSVKATGKIAQIPVSEAYLGRVINALANPIDGRGQISASESRLIESPAPGIISRRSVYEPLQTGLIAIDSMIPIGRGQRELIIGDRQTGKTAVATDTILNQQGQNVICVYVAIGQKASSVAQVVTSLQERGAMEYTIVVAETADSPATLQYLAPYTGAALAEYFMYREQHTLIIYDDLSKQAQAYRQMSLLLRRPPGREAYPGDVFYLHSRLLERAAKLSSQLGEGSMTALPIVETQSGDVSAYIPTNVISITDGQIFLSADLFNAGIRPAINVGISVSRVGSAAQIKAMKQVAGKLKLELAQFAELEAFAQFSSDLDKATQNQLARGQRLRELLKQSQSAPLTVEEQIMTIYTGTNGYLDGLEIGQVRTFLVQLRTYLKTNKPQFQEIISSTKTLTPEAESFLKEGIQEQLERFLLQEKL</sequence>
<comment type="function">
    <text evidence="2">Produces ATP from ADP in the presence of a proton gradient across the membrane. The alpha chain is a regulatory subunit.</text>
</comment>
<comment type="catalytic activity">
    <reaction evidence="2">
        <text>ATP + H2O + 4 H(+)(in) = ADP + phosphate + 5 H(+)(out)</text>
        <dbReference type="Rhea" id="RHEA:57720"/>
        <dbReference type="ChEBI" id="CHEBI:15377"/>
        <dbReference type="ChEBI" id="CHEBI:15378"/>
        <dbReference type="ChEBI" id="CHEBI:30616"/>
        <dbReference type="ChEBI" id="CHEBI:43474"/>
        <dbReference type="ChEBI" id="CHEBI:456216"/>
        <dbReference type="EC" id="7.1.2.2"/>
    </reaction>
</comment>
<comment type="subunit">
    <text evidence="2">F-type ATPases have 2 components, CF(1) - the catalytic core - and CF(0) - the membrane proton channel. CF(1) has five subunits: alpha(3), beta(3), gamma(1), delta(1), epsilon(1). CF(0) has four main subunits: a, b, b' and c.</text>
</comment>
<comment type="subcellular location">
    <subcellularLocation>
        <location evidence="2">Plastid</location>
        <location evidence="2">Chloroplast thylakoid membrane</location>
        <topology evidence="2">Peripheral membrane protein</topology>
    </subcellularLocation>
</comment>
<comment type="similarity">
    <text evidence="2">Belongs to the ATPase alpha/beta chains family.</text>
</comment>
<reference key="1">
    <citation type="submission" date="2007-03" db="EMBL/GenBank/DDBJ databases">
        <title>Sequencing analysis of Lobularia maritima chloroplast DNA.</title>
        <authorList>
            <person name="Hosouchi T."/>
            <person name="Tsuruoka H."/>
            <person name="Kotani H."/>
        </authorList>
    </citation>
    <scope>NUCLEOTIDE SEQUENCE [LARGE SCALE GENOMIC DNA]</scope>
</reference>
<feature type="chain" id="PRO_0000339094" description="ATP synthase subunit alpha, chloroplastic">
    <location>
        <begin position="1"/>
        <end position="507"/>
    </location>
</feature>
<feature type="binding site" evidence="2">
    <location>
        <begin position="170"/>
        <end position="177"/>
    </location>
    <ligand>
        <name>ATP</name>
        <dbReference type="ChEBI" id="CHEBI:30616"/>
    </ligand>
</feature>
<feature type="site" description="Required for activity" evidence="2">
    <location>
        <position position="363"/>
    </location>
</feature>
<feature type="modified residue" description="Phosphothreonine" evidence="1">
    <location>
        <position position="257"/>
    </location>
</feature>
<keyword id="KW-0066">ATP synthesis</keyword>
<keyword id="KW-0067">ATP-binding</keyword>
<keyword id="KW-0139">CF(1)</keyword>
<keyword id="KW-0150">Chloroplast</keyword>
<keyword id="KW-0375">Hydrogen ion transport</keyword>
<keyword id="KW-0406">Ion transport</keyword>
<keyword id="KW-0472">Membrane</keyword>
<keyword id="KW-0547">Nucleotide-binding</keyword>
<keyword id="KW-0597">Phosphoprotein</keyword>
<keyword id="KW-0934">Plastid</keyword>
<keyword id="KW-0793">Thylakoid</keyword>
<keyword id="KW-1278">Translocase</keyword>
<keyword id="KW-0813">Transport</keyword>
<gene>
    <name evidence="2" type="primary">atpA</name>
</gene>
<accession>A4QLH9</accession>
<organism>
    <name type="scientific">Lobularia maritima</name>
    <name type="common">Sweet alyssum</name>
    <name type="synonym">Alyssum maritimum</name>
    <dbReference type="NCBI Taxonomy" id="226051"/>
    <lineage>
        <taxon>Eukaryota</taxon>
        <taxon>Viridiplantae</taxon>
        <taxon>Streptophyta</taxon>
        <taxon>Embryophyta</taxon>
        <taxon>Tracheophyta</taxon>
        <taxon>Spermatophyta</taxon>
        <taxon>Magnoliopsida</taxon>
        <taxon>eudicotyledons</taxon>
        <taxon>Gunneridae</taxon>
        <taxon>Pentapetalae</taxon>
        <taxon>rosids</taxon>
        <taxon>malvids</taxon>
        <taxon>Brassicales</taxon>
        <taxon>Brassicaceae</taxon>
        <taxon>Anastaticeae</taxon>
        <taxon>Lobularia</taxon>
    </lineage>
</organism>
<proteinExistence type="inferred from homology"/>
<evidence type="ECO:0000250" key="1">
    <source>
        <dbReference type="UniProtKB" id="P56757"/>
    </source>
</evidence>
<evidence type="ECO:0000255" key="2">
    <source>
        <dbReference type="HAMAP-Rule" id="MF_01346"/>
    </source>
</evidence>
<geneLocation type="chloroplast"/>